<evidence type="ECO:0000305" key="1"/>
<evidence type="ECO:0000305" key="2">
    <source>
    </source>
</evidence>
<evidence type="ECO:0000305" key="3">
    <source>
    </source>
</evidence>
<evidence type="ECO:0000312" key="4">
    <source>
        <dbReference type="Araport" id="AT3G04600"/>
    </source>
</evidence>
<evidence type="ECO:0000312" key="5">
    <source>
        <dbReference type="EMBL" id="AAF04890.1"/>
    </source>
</evidence>
<keyword id="KW-0025">Alternative splicing</keyword>
<keyword id="KW-0030">Aminoacyl-tRNA synthetase</keyword>
<keyword id="KW-0067">ATP-binding</keyword>
<keyword id="KW-0963">Cytoplasm</keyword>
<keyword id="KW-0436">Ligase</keyword>
<keyword id="KW-0547">Nucleotide-binding</keyword>
<keyword id="KW-0648">Protein biosynthesis</keyword>
<keyword id="KW-1185">Reference proteome</keyword>
<organism>
    <name type="scientific">Arabidopsis thaliana</name>
    <name type="common">Mouse-ear cress</name>
    <dbReference type="NCBI Taxonomy" id="3702"/>
    <lineage>
        <taxon>Eukaryota</taxon>
        <taxon>Viridiplantae</taxon>
        <taxon>Streptophyta</taxon>
        <taxon>Embryophyta</taxon>
        <taxon>Tracheophyta</taxon>
        <taxon>Spermatophyta</taxon>
        <taxon>Magnoliopsida</taxon>
        <taxon>eudicotyledons</taxon>
        <taxon>Gunneridae</taxon>
        <taxon>Pentapetalae</taxon>
        <taxon>rosids</taxon>
        <taxon>malvids</taxon>
        <taxon>Brassicales</taxon>
        <taxon>Brassicaceae</taxon>
        <taxon>Camelineae</taxon>
        <taxon>Arabidopsis</taxon>
    </lineage>
</organism>
<feature type="chain" id="PRO_0000433538" description="Tryptophan--tRNA ligase, cytoplasmic">
    <location>
        <begin position="1"/>
        <end position="402"/>
    </location>
</feature>
<feature type="short sequence motif" description="'HIGH' region" evidence="1">
    <location>
        <begin position="97"/>
        <end position="106"/>
    </location>
</feature>
<feature type="short sequence motif" description="'KMSKS' region" evidence="1">
    <location>
        <begin position="280"/>
        <end position="284"/>
    </location>
</feature>
<proteinExistence type="evidence at transcript level"/>
<name>SYWC_ARATH</name>
<comment type="catalytic activity">
    <reaction evidence="1">
        <text>tRNA(Trp) + L-tryptophan + ATP = L-tryptophyl-tRNA(Trp) + AMP + diphosphate + H(+)</text>
        <dbReference type="Rhea" id="RHEA:24080"/>
        <dbReference type="Rhea" id="RHEA-COMP:9671"/>
        <dbReference type="Rhea" id="RHEA-COMP:9705"/>
        <dbReference type="ChEBI" id="CHEBI:15378"/>
        <dbReference type="ChEBI" id="CHEBI:30616"/>
        <dbReference type="ChEBI" id="CHEBI:33019"/>
        <dbReference type="ChEBI" id="CHEBI:57912"/>
        <dbReference type="ChEBI" id="CHEBI:78442"/>
        <dbReference type="ChEBI" id="CHEBI:78535"/>
        <dbReference type="ChEBI" id="CHEBI:456215"/>
        <dbReference type="EC" id="6.1.1.2"/>
    </reaction>
</comment>
<comment type="subcellular location">
    <subcellularLocation>
        <location evidence="2 3">Cytoplasm</location>
        <location evidence="2 3">Cytosol</location>
    </subcellularLocation>
</comment>
<comment type="alternative products">
    <event type="alternative splicing"/>
    <isoform>
        <id>Q9SR15-1</id>
        <name>1</name>
        <sequence type="displayed"/>
    </isoform>
    <text evidence="1">A number of isoforms are produced. According to EST sequences.</text>
</comment>
<comment type="similarity">
    <text evidence="1">Belongs to the class-I aminoacyl-tRNA synthetase family.</text>
</comment>
<sequence length="402" mass="45754">MEVDKKDEREAESSEQVVNPWEVSAKDGGKIDYDKLIDKFGCQRLDESLIDRVQRLTSRQPHVFLRRSVFFAHRDFNEILDAYERGDKFYLYTGRGPSSEALHLGHLIPFMFTKYLQEAFKVPLVIQLTDDEKSIWKNLSVEESQRLARENAKDIIACGFDVTKTFIFSDFDYVGGAFYKNMVKVGKCVTLNKAMGIFGFSGEDPIAKLSFPPVQAVPSFPSSFPHLFPGKDNLRCLIPCAIDQDPYFRMTRDVAPRLGYSKPALIESTFFPALQGENGKMSASDPNSAIYVTDSAKDIKNKINRYAFSGGQDSIEKHRELGANLEVDIPVKYLSFFLEDDSELEHIKKEYGEGRMLTGEVKKRLTEVLTEIVERHRRARAAVTDEMVDAFMAVRPLPSMFE</sequence>
<dbReference type="EC" id="6.1.1.2" evidence="1"/>
<dbReference type="EMBL" id="AC011437">
    <property type="protein sequence ID" value="AAF04890.1"/>
    <property type="molecule type" value="Genomic_DNA"/>
</dbReference>
<dbReference type="EMBL" id="CP002686">
    <property type="protein sequence ID" value="AEE74103.1"/>
    <property type="molecule type" value="Genomic_DNA"/>
</dbReference>
<dbReference type="EMBL" id="CP002686">
    <property type="protein sequence ID" value="AEE74105.1"/>
    <property type="molecule type" value="Genomic_DNA"/>
</dbReference>
<dbReference type="EMBL" id="AY080709">
    <property type="protein sequence ID" value="AAL85027.1"/>
    <property type="molecule type" value="mRNA"/>
</dbReference>
<dbReference type="EMBL" id="AY117275">
    <property type="protein sequence ID" value="AAM51350.1"/>
    <property type="molecule type" value="mRNA"/>
</dbReference>
<dbReference type="EMBL" id="AK226252">
    <property type="protein sequence ID" value="BAE98413.1"/>
    <property type="molecule type" value="mRNA"/>
</dbReference>
<dbReference type="RefSeq" id="NP_001078104.1">
    <molecule id="Q9SR15-1"/>
    <property type="nucleotide sequence ID" value="NM_001084635.1"/>
</dbReference>
<dbReference type="RefSeq" id="NP_187110.1">
    <molecule id="Q9SR15-1"/>
    <property type="nucleotide sequence ID" value="NM_111331.5"/>
</dbReference>
<dbReference type="SMR" id="Q9SR15"/>
<dbReference type="FunCoup" id="Q9SR15">
    <property type="interactions" value="4795"/>
</dbReference>
<dbReference type="IntAct" id="Q9SR15">
    <property type="interactions" value="1"/>
</dbReference>
<dbReference type="STRING" id="3702.Q9SR15"/>
<dbReference type="PaxDb" id="3702-AT3G04600.1"/>
<dbReference type="ProteomicsDB" id="245267">
    <molecule id="Q9SR15-1"/>
</dbReference>
<dbReference type="DNASU" id="819617"/>
<dbReference type="EnsemblPlants" id="AT3G04600.1">
    <molecule id="Q9SR15-1"/>
    <property type="protein sequence ID" value="AT3G04600.1"/>
    <property type="gene ID" value="AT3G04600"/>
</dbReference>
<dbReference type="EnsemblPlants" id="AT3G04600.3">
    <molecule id="Q9SR15-1"/>
    <property type="protein sequence ID" value="AT3G04600.3"/>
    <property type="gene ID" value="AT3G04600"/>
</dbReference>
<dbReference type="GeneID" id="819617"/>
<dbReference type="Gramene" id="AT3G04600.1">
    <molecule id="Q9SR15-1"/>
    <property type="protein sequence ID" value="AT3G04600.1"/>
    <property type="gene ID" value="AT3G04600"/>
</dbReference>
<dbReference type="Gramene" id="AT3G04600.3">
    <molecule id="Q9SR15-1"/>
    <property type="protein sequence ID" value="AT3G04600.3"/>
    <property type="gene ID" value="AT3G04600"/>
</dbReference>
<dbReference type="KEGG" id="ath:AT3G04600"/>
<dbReference type="Araport" id="AT3G04600"/>
<dbReference type="TAIR" id="AT3G04600"/>
<dbReference type="eggNOG" id="KOG2145">
    <property type="taxonomic scope" value="Eukaryota"/>
</dbReference>
<dbReference type="HOGENOM" id="CLU_032621_0_1_1"/>
<dbReference type="InParanoid" id="Q9SR15"/>
<dbReference type="OMA" id="SIYHRFM"/>
<dbReference type="PhylomeDB" id="Q9SR15"/>
<dbReference type="BRENDA" id="6.1.1.2">
    <property type="organism ID" value="399"/>
</dbReference>
<dbReference type="CD-CODE" id="4299E36E">
    <property type="entry name" value="Nucleolus"/>
</dbReference>
<dbReference type="PRO" id="PR:Q9SR15"/>
<dbReference type="Proteomes" id="UP000006548">
    <property type="component" value="Chromosome 3"/>
</dbReference>
<dbReference type="ExpressionAtlas" id="Q9SR15">
    <property type="expression patterns" value="baseline and differential"/>
</dbReference>
<dbReference type="GO" id="GO:0005829">
    <property type="term" value="C:cytosol"/>
    <property type="evidence" value="ECO:0007005"/>
    <property type="project" value="TAIR"/>
</dbReference>
<dbReference type="GO" id="GO:0005524">
    <property type="term" value="F:ATP binding"/>
    <property type="evidence" value="ECO:0007669"/>
    <property type="project" value="UniProtKB-KW"/>
</dbReference>
<dbReference type="GO" id="GO:0004830">
    <property type="term" value="F:tryptophan-tRNA ligase activity"/>
    <property type="evidence" value="ECO:0007669"/>
    <property type="project" value="UniProtKB-EC"/>
</dbReference>
<dbReference type="GO" id="GO:0009791">
    <property type="term" value="P:post-embryonic development"/>
    <property type="evidence" value="ECO:0007669"/>
    <property type="project" value="UniProtKB-ARBA"/>
</dbReference>
<dbReference type="GO" id="GO:0048608">
    <property type="term" value="P:reproductive structure development"/>
    <property type="evidence" value="ECO:0007669"/>
    <property type="project" value="UniProtKB-ARBA"/>
</dbReference>
<dbReference type="GO" id="GO:0006436">
    <property type="term" value="P:tryptophanyl-tRNA aminoacylation"/>
    <property type="evidence" value="ECO:0000250"/>
    <property type="project" value="TAIR"/>
</dbReference>
<dbReference type="CDD" id="cd00806">
    <property type="entry name" value="TrpRS_core"/>
    <property type="match status" value="1"/>
</dbReference>
<dbReference type="FunFam" id="1.10.240.10:FF:000003">
    <property type="entry name" value="Tryptophan--tRNA ligase, cytoplasmic"/>
    <property type="match status" value="1"/>
</dbReference>
<dbReference type="FunFam" id="3.40.50.620:FF:000033">
    <property type="entry name" value="tryptophan--tRNA ligase, cytoplasmic"/>
    <property type="match status" value="1"/>
</dbReference>
<dbReference type="Gene3D" id="3.40.50.620">
    <property type="entry name" value="HUPs"/>
    <property type="match status" value="1"/>
</dbReference>
<dbReference type="Gene3D" id="1.10.240.10">
    <property type="entry name" value="Tyrosyl-Transfer RNA Synthetase"/>
    <property type="match status" value="1"/>
</dbReference>
<dbReference type="InterPro" id="IPR001412">
    <property type="entry name" value="aa-tRNA-synth_I_CS"/>
</dbReference>
<dbReference type="InterPro" id="IPR002305">
    <property type="entry name" value="aa-tRNA-synth_Ic"/>
</dbReference>
<dbReference type="InterPro" id="IPR014729">
    <property type="entry name" value="Rossmann-like_a/b/a_fold"/>
</dbReference>
<dbReference type="InterPro" id="IPR002306">
    <property type="entry name" value="Trp-tRNA-ligase"/>
</dbReference>
<dbReference type="NCBIfam" id="TIGR00233">
    <property type="entry name" value="trpS"/>
    <property type="match status" value="1"/>
</dbReference>
<dbReference type="PANTHER" id="PTHR10055:SF1">
    <property type="entry name" value="TRYPTOPHAN--TRNA LIGASE, CYTOPLASMIC"/>
    <property type="match status" value="1"/>
</dbReference>
<dbReference type="PANTHER" id="PTHR10055">
    <property type="entry name" value="TRYPTOPHANYL-TRNA SYNTHETASE"/>
    <property type="match status" value="1"/>
</dbReference>
<dbReference type="Pfam" id="PF00579">
    <property type="entry name" value="tRNA-synt_1b"/>
    <property type="match status" value="1"/>
</dbReference>
<dbReference type="PRINTS" id="PR01039">
    <property type="entry name" value="TRNASYNTHTRP"/>
</dbReference>
<dbReference type="SUPFAM" id="SSF52374">
    <property type="entry name" value="Nucleotidylyl transferase"/>
    <property type="match status" value="1"/>
</dbReference>
<dbReference type="PROSITE" id="PS00178">
    <property type="entry name" value="AA_TRNA_LIGASE_I"/>
    <property type="match status" value="1"/>
</dbReference>
<protein>
    <recommendedName>
        <fullName evidence="1">Tryptophan--tRNA ligase, cytoplasmic</fullName>
        <ecNumber evidence="1">6.1.1.2</ecNumber>
    </recommendedName>
    <alternativeName>
        <fullName evidence="1">Tryptophanyl-tRNA synthetase</fullName>
        <shortName evidence="1">TrpRS</shortName>
    </alternativeName>
</protein>
<gene>
    <name evidence="4" type="ordered locus">At3g04600</name>
    <name evidence="5" type="ORF">F7O18.7</name>
</gene>
<accession>Q9SR15</accession>
<reference key="1">
    <citation type="journal article" date="2000" name="Nature">
        <title>Sequence and analysis of chromosome 3 of the plant Arabidopsis thaliana.</title>
        <authorList>
            <person name="Salanoubat M."/>
            <person name="Lemcke K."/>
            <person name="Rieger M."/>
            <person name="Ansorge W."/>
            <person name="Unseld M."/>
            <person name="Fartmann B."/>
            <person name="Valle G."/>
            <person name="Bloecker H."/>
            <person name="Perez-Alonso M."/>
            <person name="Obermaier B."/>
            <person name="Delseny M."/>
            <person name="Boutry M."/>
            <person name="Grivell L.A."/>
            <person name="Mache R."/>
            <person name="Puigdomenech P."/>
            <person name="De Simone V."/>
            <person name="Choisne N."/>
            <person name="Artiguenave F."/>
            <person name="Robert C."/>
            <person name="Brottier P."/>
            <person name="Wincker P."/>
            <person name="Cattolico L."/>
            <person name="Weissenbach J."/>
            <person name="Saurin W."/>
            <person name="Quetier F."/>
            <person name="Schaefer M."/>
            <person name="Mueller-Auer S."/>
            <person name="Gabel C."/>
            <person name="Fuchs M."/>
            <person name="Benes V."/>
            <person name="Wurmbach E."/>
            <person name="Drzonek H."/>
            <person name="Erfle H."/>
            <person name="Jordan N."/>
            <person name="Bangert S."/>
            <person name="Wiedelmann R."/>
            <person name="Kranz H."/>
            <person name="Voss H."/>
            <person name="Holland R."/>
            <person name="Brandt P."/>
            <person name="Nyakatura G."/>
            <person name="Vezzi A."/>
            <person name="D'Angelo M."/>
            <person name="Pallavicini A."/>
            <person name="Toppo S."/>
            <person name="Simionati B."/>
            <person name="Conrad A."/>
            <person name="Hornischer K."/>
            <person name="Kauer G."/>
            <person name="Loehnert T.-H."/>
            <person name="Nordsiek G."/>
            <person name="Reichelt J."/>
            <person name="Scharfe M."/>
            <person name="Schoen O."/>
            <person name="Bargues M."/>
            <person name="Terol J."/>
            <person name="Climent J."/>
            <person name="Navarro P."/>
            <person name="Collado C."/>
            <person name="Perez-Perez A."/>
            <person name="Ottenwaelder B."/>
            <person name="Duchemin D."/>
            <person name="Cooke R."/>
            <person name="Laudie M."/>
            <person name="Berger-Llauro C."/>
            <person name="Purnelle B."/>
            <person name="Masuy D."/>
            <person name="de Haan M."/>
            <person name="Maarse A.C."/>
            <person name="Alcaraz J.-P."/>
            <person name="Cottet A."/>
            <person name="Casacuberta E."/>
            <person name="Monfort A."/>
            <person name="Argiriou A."/>
            <person name="Flores M."/>
            <person name="Liguori R."/>
            <person name="Vitale D."/>
            <person name="Mannhaupt G."/>
            <person name="Haase D."/>
            <person name="Schoof H."/>
            <person name="Rudd S."/>
            <person name="Zaccaria P."/>
            <person name="Mewes H.-W."/>
            <person name="Mayer K.F.X."/>
            <person name="Kaul S."/>
            <person name="Town C.D."/>
            <person name="Koo H.L."/>
            <person name="Tallon L.J."/>
            <person name="Jenkins J."/>
            <person name="Rooney T."/>
            <person name="Rizzo M."/>
            <person name="Walts A."/>
            <person name="Utterback T."/>
            <person name="Fujii C.Y."/>
            <person name="Shea T.P."/>
            <person name="Creasy T.H."/>
            <person name="Haas B."/>
            <person name="Maiti R."/>
            <person name="Wu D."/>
            <person name="Peterson J."/>
            <person name="Van Aken S."/>
            <person name="Pai G."/>
            <person name="Militscher J."/>
            <person name="Sellers P."/>
            <person name="Gill J.E."/>
            <person name="Feldblyum T.V."/>
            <person name="Preuss D."/>
            <person name="Lin X."/>
            <person name="Nierman W.C."/>
            <person name="Salzberg S.L."/>
            <person name="White O."/>
            <person name="Venter J.C."/>
            <person name="Fraser C.M."/>
            <person name="Kaneko T."/>
            <person name="Nakamura Y."/>
            <person name="Sato S."/>
            <person name="Kato T."/>
            <person name="Asamizu E."/>
            <person name="Sasamoto S."/>
            <person name="Kimura T."/>
            <person name="Idesawa K."/>
            <person name="Kawashima K."/>
            <person name="Kishida Y."/>
            <person name="Kiyokawa C."/>
            <person name="Kohara M."/>
            <person name="Matsumoto M."/>
            <person name="Matsuno A."/>
            <person name="Muraki A."/>
            <person name="Nakayama S."/>
            <person name="Nakazaki N."/>
            <person name="Shinpo S."/>
            <person name="Takeuchi C."/>
            <person name="Wada T."/>
            <person name="Watanabe A."/>
            <person name="Yamada M."/>
            <person name="Yasuda M."/>
            <person name="Tabata S."/>
        </authorList>
    </citation>
    <scope>NUCLEOTIDE SEQUENCE [LARGE SCALE GENOMIC DNA]</scope>
    <source>
        <strain>cv. Columbia</strain>
    </source>
</reference>
<reference key="2">
    <citation type="journal article" date="2017" name="Plant J.">
        <title>Araport11: a complete reannotation of the Arabidopsis thaliana reference genome.</title>
        <authorList>
            <person name="Cheng C.Y."/>
            <person name="Krishnakumar V."/>
            <person name="Chan A.P."/>
            <person name="Thibaud-Nissen F."/>
            <person name="Schobel S."/>
            <person name="Town C.D."/>
        </authorList>
    </citation>
    <scope>GENOME REANNOTATION</scope>
    <source>
        <strain>cv. Columbia</strain>
    </source>
</reference>
<reference key="3">
    <citation type="journal article" date="2003" name="Science">
        <title>Empirical analysis of transcriptional activity in the Arabidopsis genome.</title>
        <authorList>
            <person name="Yamada K."/>
            <person name="Lim J."/>
            <person name="Dale J.M."/>
            <person name="Chen H."/>
            <person name="Shinn P."/>
            <person name="Palm C.J."/>
            <person name="Southwick A.M."/>
            <person name="Wu H.C."/>
            <person name="Kim C.J."/>
            <person name="Nguyen M."/>
            <person name="Pham P.K."/>
            <person name="Cheuk R.F."/>
            <person name="Karlin-Newmann G."/>
            <person name="Liu S.X."/>
            <person name="Lam B."/>
            <person name="Sakano H."/>
            <person name="Wu T."/>
            <person name="Yu G."/>
            <person name="Miranda M."/>
            <person name="Quach H.L."/>
            <person name="Tripp M."/>
            <person name="Chang C.H."/>
            <person name="Lee J.M."/>
            <person name="Toriumi M.J."/>
            <person name="Chan M.M."/>
            <person name="Tang C.C."/>
            <person name="Onodera C.S."/>
            <person name="Deng J.M."/>
            <person name="Akiyama K."/>
            <person name="Ansari Y."/>
            <person name="Arakawa T."/>
            <person name="Banh J."/>
            <person name="Banno F."/>
            <person name="Bowser L."/>
            <person name="Brooks S.Y."/>
            <person name="Carninci P."/>
            <person name="Chao Q."/>
            <person name="Choy N."/>
            <person name="Enju A."/>
            <person name="Goldsmith A.D."/>
            <person name="Gurjal M."/>
            <person name="Hansen N.F."/>
            <person name="Hayashizaki Y."/>
            <person name="Johnson-Hopson C."/>
            <person name="Hsuan V.W."/>
            <person name="Iida K."/>
            <person name="Karnes M."/>
            <person name="Khan S."/>
            <person name="Koesema E."/>
            <person name="Ishida J."/>
            <person name="Jiang P.X."/>
            <person name="Jones T."/>
            <person name="Kawai J."/>
            <person name="Kamiya A."/>
            <person name="Meyers C."/>
            <person name="Nakajima M."/>
            <person name="Narusaka M."/>
            <person name="Seki M."/>
            <person name="Sakurai T."/>
            <person name="Satou M."/>
            <person name="Tamse R."/>
            <person name="Vaysberg M."/>
            <person name="Wallender E.K."/>
            <person name="Wong C."/>
            <person name="Yamamura Y."/>
            <person name="Yuan S."/>
            <person name="Shinozaki K."/>
            <person name="Davis R.W."/>
            <person name="Theologis A."/>
            <person name="Ecker J.R."/>
        </authorList>
    </citation>
    <scope>NUCLEOTIDE SEQUENCE [LARGE SCALE MRNA]</scope>
    <source>
        <strain>cv. Columbia</strain>
    </source>
</reference>
<reference key="4">
    <citation type="submission" date="2006-07" db="EMBL/GenBank/DDBJ databases">
        <title>Large-scale analysis of RIKEN Arabidopsis full-length (RAFL) cDNAs.</title>
        <authorList>
            <person name="Totoki Y."/>
            <person name="Seki M."/>
            <person name="Ishida J."/>
            <person name="Nakajima M."/>
            <person name="Enju A."/>
            <person name="Kamiya A."/>
            <person name="Narusaka M."/>
            <person name="Shin-i T."/>
            <person name="Nakagawa M."/>
            <person name="Sakamoto N."/>
            <person name="Oishi K."/>
            <person name="Kohara Y."/>
            <person name="Kobayashi M."/>
            <person name="Toyoda A."/>
            <person name="Sakaki Y."/>
            <person name="Sakurai T."/>
            <person name="Iida K."/>
            <person name="Akiyama K."/>
            <person name="Satou M."/>
            <person name="Toyoda T."/>
            <person name="Konagaya A."/>
            <person name="Carninci P."/>
            <person name="Kawai J."/>
            <person name="Hayashizaki Y."/>
            <person name="Shinozaki K."/>
        </authorList>
    </citation>
    <scope>NUCLEOTIDE SEQUENCE [LARGE SCALE MRNA]</scope>
    <source>
        <strain>cv. Columbia</strain>
    </source>
</reference>
<reference key="5">
    <citation type="journal article" date="2005" name="Plant J.">
        <title>Requirement of aminoacyl-tRNA synthetases for gametogenesis and embryo development in Arabidopsis.</title>
        <authorList>
            <person name="Berg M."/>
            <person name="Rogers R."/>
            <person name="Muralla R."/>
            <person name="Meinke D."/>
        </authorList>
    </citation>
    <scope>SUBCELLULAR LOCATION</scope>
</reference>
<reference key="6">
    <citation type="journal article" date="2005" name="Proc. Natl. Acad. Sci. U.S.A.">
        <title>Dual targeting is the rule for organellar aminoacyl-tRNA synthetases in Arabidopsis thaliana.</title>
        <authorList>
            <person name="Duchene A.-M."/>
            <person name="Giritch A."/>
            <person name="Hoffmann B."/>
            <person name="Cognat V."/>
            <person name="Lancelin D."/>
            <person name="Peeters N.M."/>
            <person name="Zaepfel M."/>
            <person name="Marechal-Drouard L."/>
            <person name="Small I.D."/>
        </authorList>
    </citation>
    <scope>SUBCELLULAR LOCATION</scope>
</reference>